<sequence>MSSGERVAKVVLVDIEGTTTSISFVHDVLFPYAKQNVEKFLRDFWKEDDIKHIVQDLKQVPKFADYKALLSAPPTEVDVELIAGFVRYLIDQDLKVTPMKTLQGLIWAQGYANGELKGHVYEDVPAAFEAWRAAGLRIAVYSSGSVAAQKLIFGHSLAGNLQPHLSAYFDTHVGHKQEQQSYENIAQQLKEDPKQILFLTDIPGEAAAARSAGLQAIILQRPGNAGLADDQKASFELIPDFKPLHNLKLPINKSQA</sequence>
<name>ENOPH_DROSI</name>
<accession>B4QW91</accession>
<proteinExistence type="inferred from homology"/>
<protein>
    <recommendedName>
        <fullName evidence="1">Enolase-phosphatase E1</fullName>
        <ecNumber evidence="1">3.1.3.77</ecNumber>
    </recommendedName>
    <alternativeName>
        <fullName evidence="1">2,3-diketo-5-methylthio-1-phosphopentane phosphatase</fullName>
    </alternativeName>
</protein>
<reference key="1">
    <citation type="journal article" date="2007" name="Nature">
        <title>Evolution of genes and genomes on the Drosophila phylogeny.</title>
        <authorList>
            <consortium name="Drosophila 12 genomes consortium"/>
        </authorList>
    </citation>
    <scope>NUCLEOTIDE SEQUENCE [LARGE SCALE GENOMIC DNA]</scope>
</reference>
<comment type="function">
    <text evidence="1">Bifunctional enzyme that catalyzes the enolization of 2,3-diketo-5-methylthiopentyl-1-phosphate (DK-MTP-1-P) into the intermediate 2-hydroxy-3-keto-5-methylthiopentenyl-1-phosphate (HK-MTPenyl-1-P), which is then dephosphorylated to form the acireductone 1,2-dihydroxy-3-keto-5-methylthiopentene (DHK-MTPene).</text>
</comment>
<comment type="catalytic activity">
    <reaction evidence="1">
        <text>5-methylsulfanyl-2,3-dioxopentyl phosphate + H2O = 1,2-dihydroxy-5-(methylsulfanyl)pent-1-en-3-one + phosphate</text>
        <dbReference type="Rhea" id="RHEA:21700"/>
        <dbReference type="ChEBI" id="CHEBI:15377"/>
        <dbReference type="ChEBI" id="CHEBI:43474"/>
        <dbReference type="ChEBI" id="CHEBI:49252"/>
        <dbReference type="ChEBI" id="CHEBI:58828"/>
        <dbReference type="EC" id="3.1.3.77"/>
    </reaction>
</comment>
<comment type="cofactor">
    <cofactor evidence="1">
        <name>Mg(2+)</name>
        <dbReference type="ChEBI" id="CHEBI:18420"/>
    </cofactor>
    <text evidence="1">Binds 1 Mg(2+) ion per subunit.</text>
</comment>
<comment type="pathway">
    <text evidence="1">Amino-acid biosynthesis; L-methionine biosynthesis via salvage pathway; L-methionine from S-methyl-5-thio-alpha-D-ribose 1-phosphate: step 3/6.</text>
</comment>
<comment type="pathway">
    <text evidence="1">Amino-acid biosynthesis; L-methionine biosynthesis via salvage pathway; L-methionine from S-methyl-5-thio-alpha-D-ribose 1-phosphate: step 4/6.</text>
</comment>
<comment type="subunit">
    <text evidence="1">Monomer.</text>
</comment>
<comment type="subcellular location">
    <subcellularLocation>
        <location evidence="1">Cytoplasm</location>
    </subcellularLocation>
    <subcellularLocation>
        <location evidence="1">Nucleus</location>
    </subcellularLocation>
</comment>
<comment type="similarity">
    <text evidence="1">Belongs to the HAD-like hydrolase superfamily. MasA/MtnC family.</text>
</comment>
<organism>
    <name type="scientific">Drosophila simulans</name>
    <name type="common">Fruit fly</name>
    <dbReference type="NCBI Taxonomy" id="7240"/>
    <lineage>
        <taxon>Eukaryota</taxon>
        <taxon>Metazoa</taxon>
        <taxon>Ecdysozoa</taxon>
        <taxon>Arthropoda</taxon>
        <taxon>Hexapoda</taxon>
        <taxon>Insecta</taxon>
        <taxon>Pterygota</taxon>
        <taxon>Neoptera</taxon>
        <taxon>Endopterygota</taxon>
        <taxon>Diptera</taxon>
        <taxon>Brachycera</taxon>
        <taxon>Muscomorpha</taxon>
        <taxon>Ephydroidea</taxon>
        <taxon>Drosophilidae</taxon>
        <taxon>Drosophila</taxon>
        <taxon>Sophophora</taxon>
    </lineage>
</organism>
<keyword id="KW-0028">Amino-acid biosynthesis</keyword>
<keyword id="KW-0963">Cytoplasm</keyword>
<keyword id="KW-0378">Hydrolase</keyword>
<keyword id="KW-0460">Magnesium</keyword>
<keyword id="KW-0479">Metal-binding</keyword>
<keyword id="KW-0486">Methionine biosynthesis</keyword>
<keyword id="KW-0539">Nucleus</keyword>
<keyword id="KW-1185">Reference proteome</keyword>
<evidence type="ECO:0000255" key="1">
    <source>
        <dbReference type="HAMAP-Rule" id="MF_03117"/>
    </source>
</evidence>
<dbReference type="EC" id="3.1.3.77" evidence="1"/>
<dbReference type="EMBL" id="CM000364">
    <property type="protein sequence ID" value="EDX11690.1"/>
    <property type="molecule type" value="Genomic_DNA"/>
</dbReference>
<dbReference type="SMR" id="B4QW91"/>
<dbReference type="STRING" id="7240.B4QW91"/>
<dbReference type="EnsemblMetazoa" id="FBtr0219544">
    <property type="protein sequence ID" value="FBpp0218036"/>
    <property type="gene ID" value="FBgn0191125"/>
</dbReference>
<dbReference type="EnsemblMetazoa" id="XM_002102151.3">
    <property type="protein sequence ID" value="XP_002102187.1"/>
    <property type="gene ID" value="LOC6726779"/>
</dbReference>
<dbReference type="GeneID" id="6726779"/>
<dbReference type="KEGG" id="dsi:Dsimw501_GD19634"/>
<dbReference type="CTD" id="40630"/>
<dbReference type="HOGENOM" id="CLU_023273_0_0_1"/>
<dbReference type="OMA" id="LQGMVWE"/>
<dbReference type="OrthoDB" id="272500at2759"/>
<dbReference type="PhylomeDB" id="B4QW91"/>
<dbReference type="UniPathway" id="UPA00904">
    <property type="reaction ID" value="UER00876"/>
</dbReference>
<dbReference type="UniPathway" id="UPA00904">
    <property type="reaction ID" value="UER00877"/>
</dbReference>
<dbReference type="Proteomes" id="UP000000304">
    <property type="component" value="Chromosome 3R"/>
</dbReference>
<dbReference type="Bgee" id="FBgn0191125">
    <property type="expression patterns" value="Expressed in embryo and 3 other cell types or tissues"/>
</dbReference>
<dbReference type="GO" id="GO:0005737">
    <property type="term" value="C:cytoplasm"/>
    <property type="evidence" value="ECO:0007669"/>
    <property type="project" value="UniProtKB-SubCell"/>
</dbReference>
<dbReference type="GO" id="GO:0005634">
    <property type="term" value="C:nucleus"/>
    <property type="evidence" value="ECO:0007669"/>
    <property type="project" value="UniProtKB-SubCell"/>
</dbReference>
<dbReference type="GO" id="GO:0043874">
    <property type="term" value="F:acireductone synthase activity"/>
    <property type="evidence" value="ECO:0007669"/>
    <property type="project" value="UniProtKB-EC"/>
</dbReference>
<dbReference type="GO" id="GO:0000287">
    <property type="term" value="F:magnesium ion binding"/>
    <property type="evidence" value="ECO:0007669"/>
    <property type="project" value="UniProtKB-UniRule"/>
</dbReference>
<dbReference type="GO" id="GO:0019509">
    <property type="term" value="P:L-methionine salvage from methylthioadenosine"/>
    <property type="evidence" value="ECO:0007669"/>
    <property type="project" value="UniProtKB-UniRule"/>
</dbReference>
<dbReference type="CDD" id="cd01629">
    <property type="entry name" value="HAD_EP"/>
    <property type="match status" value="1"/>
</dbReference>
<dbReference type="FunFam" id="1.10.720.60:FF:000007">
    <property type="entry name" value="Enolase-phosphatase E1"/>
    <property type="match status" value="1"/>
</dbReference>
<dbReference type="FunFam" id="3.40.50.1000:FF:000079">
    <property type="entry name" value="Enolase-phosphatase E1"/>
    <property type="match status" value="1"/>
</dbReference>
<dbReference type="Gene3D" id="1.10.720.60">
    <property type="match status" value="1"/>
</dbReference>
<dbReference type="Gene3D" id="3.40.50.1000">
    <property type="entry name" value="HAD superfamily/HAD-like"/>
    <property type="match status" value="1"/>
</dbReference>
<dbReference type="HAMAP" id="MF_01681">
    <property type="entry name" value="Salvage_MtnC"/>
    <property type="match status" value="1"/>
</dbReference>
<dbReference type="HAMAP" id="MF_03117">
    <property type="entry name" value="Salvage_MtnC_euk"/>
    <property type="match status" value="1"/>
</dbReference>
<dbReference type="InterPro" id="IPR023943">
    <property type="entry name" value="Enolase-ppase_E1"/>
</dbReference>
<dbReference type="InterPro" id="IPR027511">
    <property type="entry name" value="ENOPH1_eukaryotes"/>
</dbReference>
<dbReference type="InterPro" id="IPR036412">
    <property type="entry name" value="HAD-like_sf"/>
</dbReference>
<dbReference type="InterPro" id="IPR006439">
    <property type="entry name" value="HAD-SF_hydro_IA"/>
</dbReference>
<dbReference type="InterPro" id="IPR023214">
    <property type="entry name" value="HAD_sf"/>
</dbReference>
<dbReference type="NCBIfam" id="TIGR01691">
    <property type="entry name" value="enolase-ppase"/>
    <property type="match status" value="1"/>
</dbReference>
<dbReference type="NCBIfam" id="TIGR01549">
    <property type="entry name" value="HAD-SF-IA-v1"/>
    <property type="match status" value="1"/>
</dbReference>
<dbReference type="PANTHER" id="PTHR20371">
    <property type="entry name" value="ENOLASE-PHOSPHATASE E1"/>
    <property type="match status" value="1"/>
</dbReference>
<dbReference type="PANTHER" id="PTHR20371:SF1">
    <property type="entry name" value="ENOLASE-PHOSPHATASE E1"/>
    <property type="match status" value="1"/>
</dbReference>
<dbReference type="Pfam" id="PF00702">
    <property type="entry name" value="Hydrolase"/>
    <property type="match status" value="1"/>
</dbReference>
<dbReference type="PRINTS" id="PR00413">
    <property type="entry name" value="HADHALOGNASE"/>
</dbReference>
<dbReference type="SFLD" id="SFLDG01129">
    <property type="entry name" value="C1.5:_HAD__Beta-PGM__Phosphata"/>
    <property type="match status" value="1"/>
</dbReference>
<dbReference type="SFLD" id="SFLDF00044">
    <property type="entry name" value="enolase-phosphatase"/>
    <property type="match status" value="1"/>
</dbReference>
<dbReference type="SUPFAM" id="SSF56784">
    <property type="entry name" value="HAD-like"/>
    <property type="match status" value="1"/>
</dbReference>
<feature type="chain" id="PRO_0000393984" description="Enolase-phosphatase E1">
    <location>
        <begin position="1"/>
        <end position="256"/>
    </location>
</feature>
<feature type="binding site" evidence="1">
    <location>
        <position position="14"/>
    </location>
    <ligand>
        <name>Mg(2+)</name>
        <dbReference type="ChEBI" id="CHEBI:18420"/>
    </ligand>
</feature>
<feature type="binding site" evidence="1">
    <location>
        <position position="16"/>
    </location>
    <ligand>
        <name>Mg(2+)</name>
        <dbReference type="ChEBI" id="CHEBI:18420"/>
    </ligand>
</feature>
<feature type="binding site" evidence="1">
    <location>
        <begin position="142"/>
        <end position="143"/>
    </location>
    <ligand>
        <name>substrate</name>
    </ligand>
</feature>
<feature type="binding site" evidence="1">
    <location>
        <position position="176"/>
    </location>
    <ligand>
        <name>substrate</name>
    </ligand>
</feature>
<feature type="binding site" evidence="1">
    <location>
        <position position="201"/>
    </location>
    <ligand>
        <name>Mg(2+)</name>
        <dbReference type="ChEBI" id="CHEBI:18420"/>
    </ligand>
</feature>
<gene>
    <name type="ORF">GD19634</name>
</gene>